<evidence type="ECO:0000255" key="1">
    <source>
        <dbReference type="HAMAP-Rule" id="MF_00185"/>
    </source>
</evidence>
<gene>
    <name evidence="1" type="primary">miaA</name>
    <name type="ordered locus">SA1144</name>
</gene>
<keyword id="KW-0067">ATP-binding</keyword>
<keyword id="KW-0460">Magnesium</keyword>
<keyword id="KW-0547">Nucleotide-binding</keyword>
<keyword id="KW-0808">Transferase</keyword>
<keyword id="KW-0819">tRNA processing</keyword>
<proteinExistence type="inferred from homology"/>
<comment type="function">
    <text evidence="1">Catalyzes the transfer of a dimethylallyl group onto the adenine at position 37 in tRNAs that read codons beginning with uridine, leading to the formation of N6-(dimethylallyl)adenosine (i(6)A).</text>
</comment>
<comment type="catalytic activity">
    <reaction evidence="1">
        <text>adenosine(37) in tRNA + dimethylallyl diphosphate = N(6)-dimethylallyladenosine(37) in tRNA + diphosphate</text>
        <dbReference type="Rhea" id="RHEA:26482"/>
        <dbReference type="Rhea" id="RHEA-COMP:10162"/>
        <dbReference type="Rhea" id="RHEA-COMP:10375"/>
        <dbReference type="ChEBI" id="CHEBI:33019"/>
        <dbReference type="ChEBI" id="CHEBI:57623"/>
        <dbReference type="ChEBI" id="CHEBI:74411"/>
        <dbReference type="ChEBI" id="CHEBI:74415"/>
        <dbReference type="EC" id="2.5.1.75"/>
    </reaction>
</comment>
<comment type="cofactor">
    <cofactor evidence="1">
        <name>Mg(2+)</name>
        <dbReference type="ChEBI" id="CHEBI:18420"/>
    </cofactor>
</comment>
<comment type="subunit">
    <text evidence="1">Monomer.</text>
</comment>
<comment type="similarity">
    <text evidence="1">Belongs to the IPP transferase family.</text>
</comment>
<accession>P65355</accession>
<accession>Q99UH0</accession>
<reference key="1">
    <citation type="journal article" date="2001" name="Lancet">
        <title>Whole genome sequencing of meticillin-resistant Staphylococcus aureus.</title>
        <authorList>
            <person name="Kuroda M."/>
            <person name="Ohta T."/>
            <person name="Uchiyama I."/>
            <person name="Baba T."/>
            <person name="Yuzawa H."/>
            <person name="Kobayashi I."/>
            <person name="Cui L."/>
            <person name="Oguchi A."/>
            <person name="Aoki K."/>
            <person name="Nagai Y."/>
            <person name="Lian J.-Q."/>
            <person name="Ito T."/>
            <person name="Kanamori M."/>
            <person name="Matsumaru H."/>
            <person name="Maruyama A."/>
            <person name="Murakami H."/>
            <person name="Hosoyama A."/>
            <person name="Mizutani-Ui Y."/>
            <person name="Takahashi N.K."/>
            <person name="Sawano T."/>
            <person name="Inoue R."/>
            <person name="Kaito C."/>
            <person name="Sekimizu K."/>
            <person name="Hirakawa H."/>
            <person name="Kuhara S."/>
            <person name="Goto S."/>
            <person name="Yabuzaki J."/>
            <person name="Kanehisa M."/>
            <person name="Yamashita A."/>
            <person name="Oshima K."/>
            <person name="Furuya K."/>
            <person name="Yoshino C."/>
            <person name="Shiba T."/>
            <person name="Hattori M."/>
            <person name="Ogasawara N."/>
            <person name="Hayashi H."/>
            <person name="Hiramatsu K."/>
        </authorList>
    </citation>
    <scope>NUCLEOTIDE SEQUENCE [LARGE SCALE GENOMIC DNA]</scope>
    <source>
        <strain>N315</strain>
    </source>
</reference>
<name>MIAA_STAAN</name>
<organism>
    <name type="scientific">Staphylococcus aureus (strain N315)</name>
    <dbReference type="NCBI Taxonomy" id="158879"/>
    <lineage>
        <taxon>Bacteria</taxon>
        <taxon>Bacillati</taxon>
        <taxon>Bacillota</taxon>
        <taxon>Bacilli</taxon>
        <taxon>Bacillales</taxon>
        <taxon>Staphylococcaceae</taxon>
        <taxon>Staphylococcus</taxon>
    </lineage>
</organism>
<protein>
    <recommendedName>
        <fullName evidence="1">tRNA dimethylallyltransferase</fullName>
        <ecNumber evidence="1">2.5.1.75</ecNumber>
    </recommendedName>
    <alternativeName>
        <fullName evidence="1">Dimethylallyl diphosphate:tRNA dimethylallyltransferase</fullName>
        <shortName evidence="1">DMAPP:tRNA dimethylallyltransferase</shortName>
        <shortName evidence="1">DMATase</shortName>
    </alternativeName>
    <alternativeName>
        <fullName evidence="1">Isopentenyl-diphosphate:tRNA isopentenyltransferase</fullName>
        <shortName evidence="1">IPP transferase</shortName>
        <shortName evidence="1">IPPT</shortName>
        <shortName evidence="1">IPTase</shortName>
    </alternativeName>
</protein>
<feature type="chain" id="PRO_0000163974" description="tRNA dimethylallyltransferase">
    <location>
        <begin position="1"/>
        <end position="311"/>
    </location>
</feature>
<feature type="region of interest" description="Interaction with substrate tRNA" evidence="1">
    <location>
        <begin position="38"/>
        <end position="41"/>
    </location>
</feature>
<feature type="region of interest" description="Interaction with substrate tRNA" evidence="1">
    <location>
        <begin position="166"/>
        <end position="170"/>
    </location>
</feature>
<feature type="binding site" evidence="1">
    <location>
        <begin position="13"/>
        <end position="20"/>
    </location>
    <ligand>
        <name>ATP</name>
        <dbReference type="ChEBI" id="CHEBI:30616"/>
    </ligand>
</feature>
<feature type="binding site" evidence="1">
    <location>
        <begin position="15"/>
        <end position="20"/>
    </location>
    <ligand>
        <name>substrate</name>
    </ligand>
</feature>
<feature type="site" description="Interaction with substrate tRNA" evidence="1">
    <location>
        <position position="104"/>
    </location>
</feature>
<dbReference type="EC" id="2.5.1.75" evidence="1"/>
<dbReference type="EMBL" id="BA000018">
    <property type="protein sequence ID" value="BAB42398.1"/>
    <property type="molecule type" value="Genomic_DNA"/>
</dbReference>
<dbReference type="PIR" id="B89905">
    <property type="entry name" value="B89905"/>
</dbReference>
<dbReference type="RefSeq" id="WP_001548613.1">
    <property type="nucleotide sequence ID" value="NC_002745.2"/>
</dbReference>
<dbReference type="SMR" id="P65355"/>
<dbReference type="EnsemblBacteria" id="BAB42398">
    <property type="protein sequence ID" value="BAB42398"/>
    <property type="gene ID" value="BAB42398"/>
</dbReference>
<dbReference type="KEGG" id="sau:SA1144"/>
<dbReference type="HOGENOM" id="CLU_032616_0_1_9"/>
<dbReference type="GO" id="GO:0005524">
    <property type="term" value="F:ATP binding"/>
    <property type="evidence" value="ECO:0007669"/>
    <property type="project" value="UniProtKB-UniRule"/>
</dbReference>
<dbReference type="GO" id="GO:0052381">
    <property type="term" value="F:tRNA dimethylallyltransferase activity"/>
    <property type="evidence" value="ECO:0007669"/>
    <property type="project" value="UniProtKB-UniRule"/>
</dbReference>
<dbReference type="GO" id="GO:0006400">
    <property type="term" value="P:tRNA modification"/>
    <property type="evidence" value="ECO:0007669"/>
    <property type="project" value="TreeGrafter"/>
</dbReference>
<dbReference type="FunFam" id="1.10.20.140:FF:000004">
    <property type="entry name" value="tRNA dimethylallyltransferase"/>
    <property type="match status" value="1"/>
</dbReference>
<dbReference type="Gene3D" id="1.10.20.140">
    <property type="match status" value="1"/>
</dbReference>
<dbReference type="Gene3D" id="3.40.50.300">
    <property type="entry name" value="P-loop containing nucleotide triphosphate hydrolases"/>
    <property type="match status" value="1"/>
</dbReference>
<dbReference type="HAMAP" id="MF_00185">
    <property type="entry name" value="IPP_trans"/>
    <property type="match status" value="1"/>
</dbReference>
<dbReference type="InterPro" id="IPR039657">
    <property type="entry name" value="Dimethylallyltransferase"/>
</dbReference>
<dbReference type="InterPro" id="IPR018022">
    <property type="entry name" value="IPT"/>
</dbReference>
<dbReference type="InterPro" id="IPR027417">
    <property type="entry name" value="P-loop_NTPase"/>
</dbReference>
<dbReference type="NCBIfam" id="TIGR00174">
    <property type="entry name" value="miaA"/>
    <property type="match status" value="1"/>
</dbReference>
<dbReference type="PANTHER" id="PTHR11088">
    <property type="entry name" value="TRNA DIMETHYLALLYLTRANSFERASE"/>
    <property type="match status" value="1"/>
</dbReference>
<dbReference type="PANTHER" id="PTHR11088:SF60">
    <property type="entry name" value="TRNA DIMETHYLALLYLTRANSFERASE"/>
    <property type="match status" value="1"/>
</dbReference>
<dbReference type="Pfam" id="PF01715">
    <property type="entry name" value="IPPT"/>
    <property type="match status" value="1"/>
</dbReference>
<dbReference type="SUPFAM" id="SSF52540">
    <property type="entry name" value="P-loop containing nucleoside triphosphate hydrolases"/>
    <property type="match status" value="2"/>
</dbReference>
<sequence>MNKNKPFIVVIVGPTASGKTELSIELAKRINGEIISGDSMQVYKHMNIGTAKVTPEEMDGIPHHLIDILNPDDTFSAYEFKRLAEDLITDITNRGKVPIIAGGTGLYIQSLIYNYELEDETVTPAQLSIVKQKLSALEHLDNQQLHDYLAQFDAVSAENIHPNNRQRVLRAIEYYLKTKKLLSNRKKVQQFTENYDTLLLGIEMSRKTLYSRINKRVDIMLDHGLFREVQQLVEQGYESCQSMQAIGYKELIPVINGQMIYEDAVNDLKQHSRQYAKRQMTWFKNKMSVHWLDKENMSLQMMLDEITTQIK</sequence>